<name>COX2_COREF</name>
<gene>
    <name type="primary">ctaC</name>
    <name type="ordered locus">CE2087</name>
</gene>
<dbReference type="EC" id="7.1.1.9"/>
<dbReference type="EMBL" id="BA000035">
    <property type="protein sequence ID" value="BAC18897.1"/>
    <property type="status" value="ALT_INIT"/>
    <property type="molecule type" value="Genomic_DNA"/>
</dbReference>
<dbReference type="RefSeq" id="WP_035108852.1">
    <property type="nucleotide sequence ID" value="NC_004369.1"/>
</dbReference>
<dbReference type="SMR" id="Q8FNQ7"/>
<dbReference type="STRING" id="196164.gene:10742515"/>
<dbReference type="KEGG" id="cef:CE2087"/>
<dbReference type="eggNOG" id="COG1622">
    <property type="taxonomic scope" value="Bacteria"/>
</dbReference>
<dbReference type="HOGENOM" id="CLU_036876_3_1_11"/>
<dbReference type="OrthoDB" id="9781261at2"/>
<dbReference type="Proteomes" id="UP000001409">
    <property type="component" value="Chromosome"/>
</dbReference>
<dbReference type="GO" id="GO:0005886">
    <property type="term" value="C:plasma membrane"/>
    <property type="evidence" value="ECO:0007669"/>
    <property type="project" value="UniProtKB-SubCell"/>
</dbReference>
<dbReference type="GO" id="GO:0005507">
    <property type="term" value="F:copper ion binding"/>
    <property type="evidence" value="ECO:0007669"/>
    <property type="project" value="InterPro"/>
</dbReference>
<dbReference type="GO" id="GO:0004129">
    <property type="term" value="F:cytochrome-c oxidase activity"/>
    <property type="evidence" value="ECO:0007669"/>
    <property type="project" value="UniProtKB-EC"/>
</dbReference>
<dbReference type="GO" id="GO:0042773">
    <property type="term" value="P:ATP synthesis coupled electron transport"/>
    <property type="evidence" value="ECO:0007669"/>
    <property type="project" value="TreeGrafter"/>
</dbReference>
<dbReference type="Gene3D" id="1.10.287.90">
    <property type="match status" value="1"/>
</dbReference>
<dbReference type="Gene3D" id="2.60.40.420">
    <property type="entry name" value="Cupredoxins - blue copper proteins"/>
    <property type="match status" value="1"/>
</dbReference>
<dbReference type="InterPro" id="IPR045187">
    <property type="entry name" value="CcO_II"/>
</dbReference>
<dbReference type="InterPro" id="IPR002429">
    <property type="entry name" value="CcO_II-like_C"/>
</dbReference>
<dbReference type="InterPro" id="IPR001505">
    <property type="entry name" value="Copper_CuA"/>
</dbReference>
<dbReference type="InterPro" id="IPR008972">
    <property type="entry name" value="Cupredoxin"/>
</dbReference>
<dbReference type="InterPro" id="IPR036257">
    <property type="entry name" value="Cyt_c_oxidase_su2_TM_sf"/>
</dbReference>
<dbReference type="PANTHER" id="PTHR22888:SF9">
    <property type="entry name" value="CYTOCHROME C OXIDASE SUBUNIT 2"/>
    <property type="match status" value="1"/>
</dbReference>
<dbReference type="PANTHER" id="PTHR22888">
    <property type="entry name" value="CYTOCHROME C OXIDASE, SUBUNIT II"/>
    <property type="match status" value="1"/>
</dbReference>
<dbReference type="Pfam" id="PF00116">
    <property type="entry name" value="COX2"/>
    <property type="match status" value="1"/>
</dbReference>
<dbReference type="PRINTS" id="PR01166">
    <property type="entry name" value="CYCOXIDASEII"/>
</dbReference>
<dbReference type="SUPFAM" id="SSF49503">
    <property type="entry name" value="Cupredoxins"/>
    <property type="match status" value="1"/>
</dbReference>
<dbReference type="SUPFAM" id="SSF81464">
    <property type="entry name" value="Cytochrome c oxidase subunit II-like, transmembrane region"/>
    <property type="match status" value="1"/>
</dbReference>
<dbReference type="PROSITE" id="PS00078">
    <property type="entry name" value="COX2"/>
    <property type="match status" value="1"/>
</dbReference>
<dbReference type="PROSITE" id="PS50857">
    <property type="entry name" value="COX2_CUA"/>
    <property type="match status" value="1"/>
</dbReference>
<dbReference type="PROSITE" id="PS51257">
    <property type="entry name" value="PROKAR_LIPOPROTEIN"/>
    <property type="match status" value="1"/>
</dbReference>
<protein>
    <recommendedName>
        <fullName>Cytochrome c oxidase subunit 2</fullName>
        <ecNumber>7.1.1.9</ecNumber>
    </recommendedName>
    <alternativeName>
        <fullName>Cytochrome aa3 subunit 2</fullName>
    </alternativeName>
    <alternativeName>
        <fullName>Cytochrome c oxidase polypeptide II</fullName>
    </alternativeName>
    <alternativeName>
        <fullName>Oxidase aa(3) subunit 2</fullName>
    </alternativeName>
</protein>
<feature type="signal peptide" evidence="3">
    <location>
        <begin position="1"/>
        <end position="28"/>
    </location>
</feature>
<feature type="chain" id="PRO_0000006053" description="Cytochrome c oxidase subunit 2" evidence="3">
    <location>
        <begin position="29"/>
        <end position="359"/>
    </location>
</feature>
<feature type="transmembrane region" description="Helical" evidence="2">
    <location>
        <begin position="64"/>
        <end position="84"/>
    </location>
</feature>
<feature type="transmembrane region" description="Helical" evidence="2">
    <location>
        <begin position="107"/>
        <end position="127"/>
    </location>
</feature>
<feature type="region of interest" description="Disordered" evidence="4">
    <location>
        <begin position="338"/>
        <end position="359"/>
    </location>
</feature>
<feature type="binding site" evidence="1">
    <location>
        <position position="244"/>
    </location>
    <ligand>
        <name>Cu cation</name>
        <dbReference type="ChEBI" id="CHEBI:23378"/>
        <label>A1</label>
    </ligand>
</feature>
<feature type="binding site" evidence="1">
    <location>
        <position position="285"/>
    </location>
    <ligand>
        <name>Cu cation</name>
        <dbReference type="ChEBI" id="CHEBI:23378"/>
        <label>A1</label>
    </ligand>
</feature>
<feature type="binding site" evidence="1">
    <location>
        <position position="285"/>
    </location>
    <ligand>
        <name>Cu cation</name>
        <dbReference type="ChEBI" id="CHEBI:23378"/>
        <label>A2</label>
    </ligand>
</feature>
<feature type="binding site" evidence="1">
    <location>
        <position position="287"/>
    </location>
    <ligand>
        <name>Cu cation</name>
        <dbReference type="ChEBI" id="CHEBI:23378"/>
        <label>A2</label>
    </ligand>
</feature>
<feature type="binding site" evidence="1">
    <location>
        <position position="289"/>
    </location>
    <ligand>
        <name>Cu cation</name>
        <dbReference type="ChEBI" id="CHEBI:23378"/>
        <label>A1</label>
    </ligand>
</feature>
<feature type="binding site" evidence="1">
    <location>
        <position position="289"/>
    </location>
    <ligand>
        <name>Cu cation</name>
        <dbReference type="ChEBI" id="CHEBI:23378"/>
        <label>A2</label>
    </ligand>
</feature>
<feature type="binding site" evidence="1">
    <location>
        <position position="293"/>
    </location>
    <ligand>
        <name>Cu cation</name>
        <dbReference type="ChEBI" id="CHEBI:23378"/>
        <label>A2</label>
    </ligand>
</feature>
<feature type="binding site" evidence="1">
    <location>
        <position position="296"/>
    </location>
    <ligand>
        <name>Cu cation</name>
        <dbReference type="ChEBI" id="CHEBI:23378"/>
        <label>A1</label>
    </ligand>
</feature>
<feature type="lipid moiety-binding region" description="N-palmitoyl cysteine" evidence="3">
    <location>
        <position position="29"/>
    </location>
</feature>
<feature type="lipid moiety-binding region" description="S-diacylglycerol cysteine" evidence="3">
    <location>
        <position position="29"/>
    </location>
</feature>
<proteinExistence type="inferred from homology"/>
<comment type="function">
    <text evidence="1">Subunits I and II form the functional core of the enzyme complex. Electrons originating in cytochrome c are transferred via heme a and Cu(A) to the binuclear center formed by heme a3 and Cu(B) (By similarity).</text>
</comment>
<comment type="catalytic activity">
    <reaction>
        <text>4 Fe(II)-[cytochrome c] + O2 + 8 H(+)(in) = 4 Fe(III)-[cytochrome c] + 2 H2O + 4 H(+)(out)</text>
        <dbReference type="Rhea" id="RHEA:11436"/>
        <dbReference type="Rhea" id="RHEA-COMP:10350"/>
        <dbReference type="Rhea" id="RHEA-COMP:14399"/>
        <dbReference type="ChEBI" id="CHEBI:15377"/>
        <dbReference type="ChEBI" id="CHEBI:15378"/>
        <dbReference type="ChEBI" id="CHEBI:15379"/>
        <dbReference type="ChEBI" id="CHEBI:29033"/>
        <dbReference type="ChEBI" id="CHEBI:29034"/>
        <dbReference type="EC" id="7.1.1.9"/>
    </reaction>
</comment>
<comment type="cofactor">
    <cofactor evidence="1">
        <name>binuclear copper center (CuA)</name>
        <dbReference type="ChEBI" id="CHEBI:47357"/>
    </cofactor>
    <text evidence="1">Binds a binuclear copper A center per subunit.</text>
</comment>
<comment type="subunit">
    <text evidence="1">Associates with subunits I, III and IV to form cytochrome c oxidase.</text>
</comment>
<comment type="subcellular location">
    <subcellularLocation>
        <location evidence="3">Cell membrane</location>
        <topology evidence="1">Multi-pass membrane protein</topology>
    </subcellularLocation>
</comment>
<comment type="similarity">
    <text evidence="5">Belongs to the cytochrome c oxidase subunit 2 family.</text>
</comment>
<comment type="sequence caution" evidence="5">
    <conflict type="erroneous initiation">
        <sequence resource="EMBL-CDS" id="BAC18897"/>
    </conflict>
</comment>
<accession>Q8FNQ7</accession>
<reference key="1">
    <citation type="journal article" date="2003" name="Genome Res.">
        <title>Comparative complete genome sequence analysis of the amino acid replacements responsible for the thermostability of Corynebacterium efficiens.</title>
        <authorList>
            <person name="Nishio Y."/>
            <person name="Nakamura Y."/>
            <person name="Kawarabayasi Y."/>
            <person name="Usuda Y."/>
            <person name="Kimura E."/>
            <person name="Sugimoto S."/>
            <person name="Matsui K."/>
            <person name="Yamagishi A."/>
            <person name="Kikuchi H."/>
            <person name="Ikeo K."/>
            <person name="Gojobori T."/>
        </authorList>
    </citation>
    <scope>NUCLEOTIDE SEQUENCE [LARGE SCALE GENOMIC DNA]</scope>
    <source>
        <strain>DSM 44549 / YS-314 / AJ 12310 / JCM 11189 / NBRC 100395</strain>
    </source>
</reference>
<keyword id="KW-1003">Cell membrane</keyword>
<keyword id="KW-0186">Copper</keyword>
<keyword id="KW-0249">Electron transport</keyword>
<keyword id="KW-0449">Lipoprotein</keyword>
<keyword id="KW-0472">Membrane</keyword>
<keyword id="KW-0479">Metal-binding</keyword>
<keyword id="KW-0564">Palmitate</keyword>
<keyword id="KW-1185">Reference proteome</keyword>
<keyword id="KW-0679">Respiratory chain</keyword>
<keyword id="KW-0732">Signal</keyword>
<keyword id="KW-1278">Translocase</keyword>
<keyword id="KW-0812">Transmembrane</keyword>
<keyword id="KW-1133">Transmembrane helix</keyword>
<keyword id="KW-0813">Transport</keyword>
<organism>
    <name type="scientific">Corynebacterium efficiens (strain DSM 44549 / YS-314 / AJ 12310 / JCM 11189 / NBRC 100395)</name>
    <dbReference type="NCBI Taxonomy" id="196164"/>
    <lineage>
        <taxon>Bacteria</taxon>
        <taxon>Bacillati</taxon>
        <taxon>Actinomycetota</taxon>
        <taxon>Actinomycetes</taxon>
        <taxon>Mycobacteriales</taxon>
        <taxon>Corynebacteriaceae</taxon>
        <taxon>Corynebacterium</taxon>
    </lineage>
</organism>
<sequence length="359" mass="39765">MEQQNKRGLKRKALLGGVLGSGGLAMAGCEVSPPGGMIGDFLRMGWPSGITPEAVSMGNFWSWVWVAAWIIGIIMWGLMLTAIFSWNAKKAEKRGEGEFPKQLQYNVPLELVLTIVPIIIVMVLFFFTVQTQDRVTALDKNPEVTVNVTAYQWNWKFGYGELAPEFAPAGGDYDGVDEARQASAEASKIDPSGNNPIHGNSKKDMSYLHFNQIETLGTTDEVPVLVLPTNTPIEFNLASADVAHSFWVPEFLFKRDLYAHPEANKSQRVFQIDEIFEEGAFVGRCAEMCGTYHAMMNFELRTVDRETFAEYIAFRDANPDATNAQALEHIGEAPYATSTAPFVSDRTGTRDGENFQTPA</sequence>
<evidence type="ECO:0000250" key="1"/>
<evidence type="ECO:0000255" key="2"/>
<evidence type="ECO:0000255" key="3">
    <source>
        <dbReference type="PROSITE-ProRule" id="PRU00303"/>
    </source>
</evidence>
<evidence type="ECO:0000256" key="4">
    <source>
        <dbReference type="SAM" id="MobiDB-lite"/>
    </source>
</evidence>
<evidence type="ECO:0000305" key="5"/>